<evidence type="ECO:0000250" key="1"/>
<evidence type="ECO:0000255" key="2"/>
<evidence type="ECO:0000305" key="3"/>
<reference key="1">
    <citation type="journal article" date="1998" name="Nature">
        <title>The complete genome of the hyperthermophilic bacterium Aquifex aeolicus.</title>
        <authorList>
            <person name="Deckert G."/>
            <person name="Warren P.V."/>
            <person name="Gaasterland T."/>
            <person name="Young W.G."/>
            <person name="Lenox A.L."/>
            <person name="Graham D.E."/>
            <person name="Overbeek R."/>
            <person name="Snead M.A."/>
            <person name="Keller M."/>
            <person name="Aujay M."/>
            <person name="Huber R."/>
            <person name="Feldman R.A."/>
            <person name="Short J.M."/>
            <person name="Olsen G.J."/>
            <person name="Swanson R.V."/>
        </authorList>
    </citation>
    <scope>NUCLEOTIDE SEQUENCE [LARGE SCALE GENOMIC DNA]</scope>
    <source>
        <strain>VF5</strain>
    </source>
</reference>
<protein>
    <recommendedName>
        <fullName>Flagella basal body P-ring formation protein FlgA</fullName>
    </recommendedName>
</protein>
<comment type="function">
    <text evidence="1">Involved in the assembly process of the P-ring formation. It may associate with FlgF on the rod constituting a structure essential for the P-ring assembly or may act as a modulator protein for the P-ring assembly (By similarity).</text>
</comment>
<comment type="subcellular location">
    <subcellularLocation>
        <location evidence="3">Periplasm</location>
    </subcellularLocation>
</comment>
<comment type="similarity">
    <text evidence="3">Belongs to the FlgA family.</text>
</comment>
<organism>
    <name type="scientific">Aquifex aeolicus (strain VF5)</name>
    <dbReference type="NCBI Taxonomy" id="224324"/>
    <lineage>
        <taxon>Bacteria</taxon>
        <taxon>Pseudomonadati</taxon>
        <taxon>Aquificota</taxon>
        <taxon>Aquificia</taxon>
        <taxon>Aquificales</taxon>
        <taxon>Aquificaceae</taxon>
        <taxon>Aquifex</taxon>
    </lineage>
</organism>
<keyword id="KW-1005">Bacterial flagellum biogenesis</keyword>
<keyword id="KW-0574">Periplasm</keyword>
<keyword id="KW-1185">Reference proteome</keyword>
<keyword id="KW-0732">Signal</keyword>
<dbReference type="EMBL" id="AE000657">
    <property type="protein sequence ID" value="AAC06962.1"/>
    <property type="molecule type" value="Genomic_DNA"/>
</dbReference>
<dbReference type="PIR" id="B70372">
    <property type="entry name" value="B70372"/>
</dbReference>
<dbReference type="RefSeq" id="NP_213566.1">
    <property type="nucleotide sequence ID" value="NC_000918.1"/>
</dbReference>
<dbReference type="SMR" id="O67005"/>
<dbReference type="STRING" id="224324.aq_833"/>
<dbReference type="EnsemblBacteria" id="AAC06962">
    <property type="protein sequence ID" value="AAC06962"/>
    <property type="gene ID" value="aq_833"/>
</dbReference>
<dbReference type="KEGG" id="aae:aq_833"/>
<dbReference type="eggNOG" id="COG1261">
    <property type="taxonomic scope" value="Bacteria"/>
</dbReference>
<dbReference type="HOGENOM" id="CLU_1238103_0_0_0"/>
<dbReference type="InParanoid" id="O67005"/>
<dbReference type="OrthoDB" id="5323072at2"/>
<dbReference type="Proteomes" id="UP000000798">
    <property type="component" value="Chromosome"/>
</dbReference>
<dbReference type="GO" id="GO:0042597">
    <property type="term" value="C:periplasmic space"/>
    <property type="evidence" value="ECO:0007669"/>
    <property type="project" value="UniProtKB-SubCell"/>
</dbReference>
<dbReference type="GO" id="GO:0044780">
    <property type="term" value="P:bacterial-type flagellum assembly"/>
    <property type="evidence" value="ECO:0007669"/>
    <property type="project" value="InterPro"/>
</dbReference>
<dbReference type="GO" id="GO:0071973">
    <property type="term" value="P:bacterial-type flagellum-dependent cell motility"/>
    <property type="evidence" value="ECO:0000318"/>
    <property type="project" value="GO_Central"/>
</dbReference>
<dbReference type="CDD" id="cd11614">
    <property type="entry name" value="SAF_CpaB_FlgA_like"/>
    <property type="match status" value="1"/>
</dbReference>
<dbReference type="Gene3D" id="2.30.30.760">
    <property type="match status" value="1"/>
</dbReference>
<dbReference type="InterPro" id="IPR017585">
    <property type="entry name" value="Flag_basal_body_FlgA_C"/>
</dbReference>
<dbReference type="InterPro" id="IPR039246">
    <property type="entry name" value="Flagellar_FlgA"/>
</dbReference>
<dbReference type="InterPro" id="IPR013974">
    <property type="entry name" value="SAF"/>
</dbReference>
<dbReference type="NCBIfam" id="TIGR03170">
    <property type="entry name" value="flgA_cterm"/>
    <property type="match status" value="1"/>
</dbReference>
<dbReference type="PANTHER" id="PTHR36307">
    <property type="entry name" value="FLAGELLA BASAL BODY P-RING FORMATION PROTEIN FLGA"/>
    <property type="match status" value="1"/>
</dbReference>
<dbReference type="PANTHER" id="PTHR36307:SF1">
    <property type="entry name" value="FLAGELLA BASAL BODY P-RING FORMATION PROTEIN FLGA"/>
    <property type="match status" value="1"/>
</dbReference>
<dbReference type="Pfam" id="PF13144">
    <property type="entry name" value="ChapFlgA"/>
    <property type="match status" value="1"/>
</dbReference>
<dbReference type="SMART" id="SM00858">
    <property type="entry name" value="SAF"/>
    <property type="match status" value="1"/>
</dbReference>
<sequence>MSSTPREYRRRMKCSLKRLIYAVNFLFFLFTFSLDLESLIKNELRKEFGEEVRLKNYKVLTGIPDNFSKVELKVYKNSPRGFLHLKNTKVGTIALELEWKCRVLVAKRDIYPGERLNFSNVEEREIYLERCPQNFKENFVNFVALKEIKKGTIVRRSYLKKEFLVKRGEIVNAVYENGNVVIRFRTKALENGYYGEVIRVLSPFSRKVIRGKIIGEGTVKILR</sequence>
<accession>O67005</accession>
<name>FLGA_AQUAE</name>
<proteinExistence type="inferred from homology"/>
<feature type="signal peptide" evidence="2">
    <location>
        <begin position="1"/>
        <end status="unknown"/>
    </location>
</feature>
<feature type="chain" id="PRO_0000009338" description="Flagella basal body P-ring formation protein FlgA">
    <location>
        <begin status="unknown"/>
        <end position="223"/>
    </location>
</feature>
<gene>
    <name type="primary">flgA</name>
    <name type="ordered locus">aq_833</name>
</gene>